<feature type="transit peptide" description="Mitochondrion" evidence="5">
    <location>
        <begin position="1"/>
        <end position="86"/>
    </location>
</feature>
<feature type="chain" id="PRO_0000399512" description="Dihydrolipoyllysine-residue succinyltransferase component of 2-oxoglutarate dehydrogenase complex 1, mitochondrial">
    <location>
        <begin position="87"/>
        <end position="464"/>
    </location>
</feature>
<feature type="domain" description="Lipoyl-binding" evidence="2">
    <location>
        <begin position="93"/>
        <end position="168"/>
    </location>
</feature>
<feature type="region of interest" description="Disordered" evidence="3">
    <location>
        <begin position="168"/>
        <end position="242"/>
    </location>
</feature>
<feature type="compositionally biased region" description="Basic and acidic residues" evidence="3">
    <location>
        <begin position="196"/>
        <end position="210"/>
    </location>
</feature>
<feature type="compositionally biased region" description="Pro residues" evidence="3">
    <location>
        <begin position="211"/>
        <end position="220"/>
    </location>
</feature>
<feature type="active site" evidence="1">
    <location>
        <position position="435"/>
    </location>
</feature>
<feature type="active site" evidence="1">
    <location>
        <position position="439"/>
    </location>
</feature>
<feature type="modified residue" description="N6-lipoyllysine" evidence="2">
    <location>
        <position position="134"/>
    </location>
</feature>
<feature type="sequence conflict" description="In Ref. 1; CAA11553." evidence="6" ref="1">
    <original>VAVSA</original>
    <variation>LVASS</variation>
    <location>
        <begin position="30"/>
        <end position="34"/>
    </location>
</feature>
<feature type="sequence conflict" description="In Ref. 1; CAA11553." evidence="6" ref="1">
    <original>I</original>
    <variation>V</variation>
    <location>
        <position position="70"/>
    </location>
</feature>
<feature type="sequence conflict" description="In Ref. 1; CAA11553." evidence="6" ref="1">
    <original>Y</original>
    <variation>F</variation>
    <location>
        <position position="74"/>
    </location>
</feature>
<feature type="sequence conflict" description="In Ref. 1; CAA11553." evidence="6" ref="1">
    <location>
        <begin position="218"/>
        <end position="219"/>
    </location>
</feature>
<protein>
    <recommendedName>
        <fullName>Dihydrolipoyllysine-residue succinyltransferase component of 2-oxoglutarate dehydrogenase complex 1, mitochondrial</fullName>
        <ecNumber>2.3.1.61</ecNumber>
    </recommendedName>
    <alternativeName>
        <fullName>2-oxoglutarate dehydrogenase complex component E2-1</fullName>
        <shortName>OGDC-E2-1</shortName>
    </alternativeName>
    <alternativeName>
        <fullName>Dihydrolipoamide succinyltransferase component of 2-oxoglutarate dehydrogenase complex 1</fullName>
    </alternativeName>
    <alternativeName>
        <fullName>E2K-1</fullName>
    </alternativeName>
</protein>
<name>ODO2A_ARATH</name>
<reference key="1">
    <citation type="submission" date="1998-01" db="EMBL/GenBank/DDBJ databases">
        <title>Cloning and characterization of 2-oxoglutarate dehydrogenase from Arabidopsis thaliana.</title>
        <authorList>
            <person name="Machuy N."/>
            <person name="Klein M."/>
            <person name="Mueller-Roeber B."/>
        </authorList>
    </citation>
    <scope>NUCLEOTIDE SEQUENCE [MRNA]</scope>
</reference>
<reference key="2">
    <citation type="journal article" date="1998" name="DNA Res.">
        <title>Structural analysis of Arabidopsis thaliana chromosome 5. IV. Sequence features of the regions of 1,456,315 bp covered by nineteen physically assigned P1 and TAC clones.</title>
        <authorList>
            <person name="Sato S."/>
            <person name="Kaneko T."/>
            <person name="Kotani H."/>
            <person name="Nakamura Y."/>
            <person name="Asamizu E."/>
            <person name="Miyajima N."/>
            <person name="Tabata S."/>
        </authorList>
    </citation>
    <scope>NUCLEOTIDE SEQUENCE [LARGE SCALE GENOMIC DNA]</scope>
    <source>
        <strain>cv. Columbia</strain>
    </source>
</reference>
<reference key="3">
    <citation type="journal article" date="2017" name="Plant J.">
        <title>Araport11: a complete reannotation of the Arabidopsis thaliana reference genome.</title>
        <authorList>
            <person name="Cheng C.Y."/>
            <person name="Krishnakumar V."/>
            <person name="Chan A.P."/>
            <person name="Thibaud-Nissen F."/>
            <person name="Schobel S."/>
            <person name="Town C.D."/>
        </authorList>
    </citation>
    <scope>GENOME REANNOTATION</scope>
    <source>
        <strain>cv. Columbia</strain>
    </source>
</reference>
<reference key="4">
    <citation type="journal article" date="2003" name="Science">
        <title>Empirical analysis of transcriptional activity in the Arabidopsis genome.</title>
        <authorList>
            <person name="Yamada K."/>
            <person name="Lim J."/>
            <person name="Dale J.M."/>
            <person name="Chen H."/>
            <person name="Shinn P."/>
            <person name="Palm C.J."/>
            <person name="Southwick A.M."/>
            <person name="Wu H.C."/>
            <person name="Kim C.J."/>
            <person name="Nguyen M."/>
            <person name="Pham P.K."/>
            <person name="Cheuk R.F."/>
            <person name="Karlin-Newmann G."/>
            <person name="Liu S.X."/>
            <person name="Lam B."/>
            <person name="Sakano H."/>
            <person name="Wu T."/>
            <person name="Yu G."/>
            <person name="Miranda M."/>
            <person name="Quach H.L."/>
            <person name="Tripp M."/>
            <person name="Chang C.H."/>
            <person name="Lee J.M."/>
            <person name="Toriumi M.J."/>
            <person name="Chan M.M."/>
            <person name="Tang C.C."/>
            <person name="Onodera C.S."/>
            <person name="Deng J.M."/>
            <person name="Akiyama K."/>
            <person name="Ansari Y."/>
            <person name="Arakawa T."/>
            <person name="Banh J."/>
            <person name="Banno F."/>
            <person name="Bowser L."/>
            <person name="Brooks S.Y."/>
            <person name="Carninci P."/>
            <person name="Chao Q."/>
            <person name="Choy N."/>
            <person name="Enju A."/>
            <person name="Goldsmith A.D."/>
            <person name="Gurjal M."/>
            <person name="Hansen N.F."/>
            <person name="Hayashizaki Y."/>
            <person name="Johnson-Hopson C."/>
            <person name="Hsuan V.W."/>
            <person name="Iida K."/>
            <person name="Karnes M."/>
            <person name="Khan S."/>
            <person name="Koesema E."/>
            <person name="Ishida J."/>
            <person name="Jiang P.X."/>
            <person name="Jones T."/>
            <person name="Kawai J."/>
            <person name="Kamiya A."/>
            <person name="Meyers C."/>
            <person name="Nakajima M."/>
            <person name="Narusaka M."/>
            <person name="Seki M."/>
            <person name="Sakurai T."/>
            <person name="Satou M."/>
            <person name="Tamse R."/>
            <person name="Vaysberg M."/>
            <person name="Wallender E.K."/>
            <person name="Wong C."/>
            <person name="Yamamura Y."/>
            <person name="Yuan S."/>
            <person name="Shinozaki K."/>
            <person name="Davis R.W."/>
            <person name="Theologis A."/>
            <person name="Ecker J.R."/>
        </authorList>
    </citation>
    <scope>NUCLEOTIDE SEQUENCE [LARGE SCALE MRNA]</scope>
    <source>
        <strain>cv. Columbia</strain>
    </source>
</reference>
<reference key="5">
    <citation type="journal article" date="2004" name="Plant Cell">
        <title>Experimental analysis of the Arabidopsis mitochondrial proteome highlights signaling and regulatory components, provides assessment of targeting prediction programs, and indicates plant-specific mitochondrial proteins.</title>
        <authorList>
            <person name="Heazlewood J.L."/>
            <person name="Tonti-Filippini J.S."/>
            <person name="Gout A.M."/>
            <person name="Day D.A."/>
            <person name="Whelan J."/>
            <person name="Millar A.H."/>
        </authorList>
    </citation>
    <scope>IDENTIFICATION BY MASS SPECTROMETRY</scope>
    <scope>SUBCELLULAR LOCATION [LARGE SCALE ANALYSIS]</scope>
    <source>
        <strain>cv. Landsberg erecta</strain>
    </source>
</reference>
<reference key="6">
    <citation type="journal article" date="2015" name="J. Exp. Bot.">
        <title>Identification of cleavage sites and substrate proteins for two mitochondrial intermediate peptidases in Arabidopsis thaliana.</title>
        <authorList>
            <person name="Carrie C."/>
            <person name="Venne A.S."/>
            <person name="Zahedi R.P."/>
            <person name="Soll J."/>
        </authorList>
    </citation>
    <scope>IDENTIFICATION BY MASS SPECTROMETRY</scope>
    <scope>CLEAVAGE OF TRANSIT PEPTIDE AFTER PHE-86</scope>
</reference>
<organism>
    <name type="scientific">Arabidopsis thaliana</name>
    <name type="common">Mouse-ear cress</name>
    <dbReference type="NCBI Taxonomy" id="3702"/>
    <lineage>
        <taxon>Eukaryota</taxon>
        <taxon>Viridiplantae</taxon>
        <taxon>Streptophyta</taxon>
        <taxon>Embryophyta</taxon>
        <taxon>Tracheophyta</taxon>
        <taxon>Spermatophyta</taxon>
        <taxon>Magnoliopsida</taxon>
        <taxon>eudicotyledons</taxon>
        <taxon>Gunneridae</taxon>
        <taxon>Pentapetalae</taxon>
        <taxon>rosids</taxon>
        <taxon>malvids</taxon>
        <taxon>Brassicales</taxon>
        <taxon>Brassicaceae</taxon>
        <taxon>Camelineae</taxon>
        <taxon>Arabidopsis</taxon>
    </lineage>
</organism>
<proteinExistence type="evidence at protein level"/>
<evidence type="ECO:0000250" key="1"/>
<evidence type="ECO:0000255" key="2">
    <source>
        <dbReference type="PROSITE-ProRule" id="PRU01066"/>
    </source>
</evidence>
<evidence type="ECO:0000256" key="3">
    <source>
        <dbReference type="SAM" id="MobiDB-lite"/>
    </source>
</evidence>
<evidence type="ECO:0000269" key="4">
    <source>
    </source>
</evidence>
<evidence type="ECO:0000269" key="5">
    <source>
    </source>
</evidence>
<evidence type="ECO:0000305" key="6"/>
<evidence type="ECO:0000305" key="7">
    <source>
    </source>
</evidence>
<comment type="function">
    <text evidence="1">The 2-oxoglutarate dehydrogenase complex catalyzes the overall conversion of 2-oxoglutarate to succinyl-CoA and CO(2). It contains multiple copies of three enzymatic components: 2-oxoglutarate dehydrogenase (E1), dihydrolipoamide succinyltransferase (E2) and lipoamide dehydrogenase (E3) (By similarity).</text>
</comment>
<comment type="catalytic activity">
    <reaction>
        <text>N(6)-[(R)-dihydrolipoyl]-L-lysyl-[protein] + succinyl-CoA = N(6)-[(R)-S(8)-succinyldihydrolipoyl]-L-lysyl-[protein] + CoA</text>
        <dbReference type="Rhea" id="RHEA:15213"/>
        <dbReference type="Rhea" id="RHEA-COMP:10475"/>
        <dbReference type="Rhea" id="RHEA-COMP:20092"/>
        <dbReference type="ChEBI" id="CHEBI:57287"/>
        <dbReference type="ChEBI" id="CHEBI:57292"/>
        <dbReference type="ChEBI" id="CHEBI:83100"/>
        <dbReference type="ChEBI" id="CHEBI:83120"/>
        <dbReference type="EC" id="2.3.1.61"/>
    </reaction>
</comment>
<comment type="cofactor">
    <cofactor evidence="1">
        <name>(R)-lipoate</name>
        <dbReference type="ChEBI" id="CHEBI:83088"/>
    </cofactor>
    <text evidence="1">Binds 1 lipoyl cofactor covalently.</text>
</comment>
<comment type="pathway">
    <text>Amino-acid degradation; L-lysine degradation via saccharopine pathway; glutaryl-CoA from L-lysine: step 6/6.</text>
</comment>
<comment type="subunit">
    <text evidence="1">Forms a 24-polypeptide structural core with octahedral symmetry.</text>
</comment>
<comment type="subcellular location">
    <subcellularLocation>
        <location evidence="4 7">Mitochondrion</location>
    </subcellularLocation>
</comment>
<comment type="similarity">
    <text evidence="6">Belongs to the 2-oxoacid dehydrogenase family.</text>
</comment>
<keyword id="KW-0012">Acyltransferase</keyword>
<keyword id="KW-0450">Lipoyl</keyword>
<keyword id="KW-0496">Mitochondrion</keyword>
<keyword id="KW-1185">Reference proteome</keyword>
<keyword id="KW-0808">Transferase</keyword>
<keyword id="KW-0809">Transit peptide</keyword>
<keyword id="KW-0816">Tricarboxylic acid cycle</keyword>
<gene>
    <name type="ordered locus">At5g55070</name>
    <name type="ORF">MCO15.2</name>
</gene>
<dbReference type="EC" id="2.3.1.61"/>
<dbReference type="EMBL" id="AJ223803">
    <property type="protein sequence ID" value="CAA11553.1"/>
    <property type="molecule type" value="mRNA"/>
</dbReference>
<dbReference type="EMBL" id="AB010071">
    <property type="protein sequence ID" value="BAB08576.1"/>
    <property type="molecule type" value="Genomic_DNA"/>
</dbReference>
<dbReference type="EMBL" id="CP002688">
    <property type="protein sequence ID" value="AED96577.1"/>
    <property type="molecule type" value="Genomic_DNA"/>
</dbReference>
<dbReference type="EMBL" id="CP002688">
    <property type="protein sequence ID" value="ANM68999.1"/>
    <property type="molecule type" value="Genomic_DNA"/>
</dbReference>
<dbReference type="EMBL" id="AY042897">
    <property type="protein sequence ID" value="AAK68837.1"/>
    <property type="molecule type" value="mRNA"/>
</dbReference>
<dbReference type="EMBL" id="AY128726">
    <property type="protein sequence ID" value="AAM91126.1"/>
    <property type="molecule type" value="mRNA"/>
</dbReference>
<dbReference type="RefSeq" id="NP_001330709.1">
    <property type="nucleotide sequence ID" value="NM_001345105.1"/>
</dbReference>
<dbReference type="RefSeq" id="NP_200318.1">
    <property type="nucleotide sequence ID" value="NM_124889.5"/>
</dbReference>
<dbReference type="SMR" id="Q9FLQ4"/>
<dbReference type="BioGRID" id="20842">
    <property type="interactions" value="29"/>
</dbReference>
<dbReference type="FunCoup" id="Q9FLQ4">
    <property type="interactions" value="3470"/>
</dbReference>
<dbReference type="IntAct" id="Q9FLQ4">
    <property type="interactions" value="1"/>
</dbReference>
<dbReference type="STRING" id="3702.Q9FLQ4"/>
<dbReference type="MetOSite" id="Q9FLQ4"/>
<dbReference type="PaxDb" id="3702-AT5G55070.1"/>
<dbReference type="ProteomicsDB" id="250874"/>
<dbReference type="EnsemblPlants" id="AT5G55070.1">
    <property type="protein sequence ID" value="AT5G55070.1"/>
    <property type="gene ID" value="AT5G55070"/>
</dbReference>
<dbReference type="EnsemblPlants" id="AT5G55070.2">
    <property type="protein sequence ID" value="AT5G55070.2"/>
    <property type="gene ID" value="AT5G55070"/>
</dbReference>
<dbReference type="GeneID" id="835598"/>
<dbReference type="Gramene" id="AT5G55070.1">
    <property type="protein sequence ID" value="AT5G55070.1"/>
    <property type="gene ID" value="AT5G55070"/>
</dbReference>
<dbReference type="Gramene" id="AT5G55070.2">
    <property type="protein sequence ID" value="AT5G55070.2"/>
    <property type="gene ID" value="AT5G55070"/>
</dbReference>
<dbReference type="KEGG" id="ath:AT5G55070"/>
<dbReference type="Araport" id="AT5G55070"/>
<dbReference type="TAIR" id="AT5G55070"/>
<dbReference type="eggNOG" id="KOG0559">
    <property type="taxonomic scope" value="Eukaryota"/>
</dbReference>
<dbReference type="HOGENOM" id="CLU_016733_0_2_1"/>
<dbReference type="InParanoid" id="Q9FLQ4"/>
<dbReference type="OMA" id="SMWSEQV"/>
<dbReference type="PhylomeDB" id="Q9FLQ4"/>
<dbReference type="BioCyc" id="ARA:AT5G55070-MONOMER"/>
<dbReference type="UniPathway" id="UPA00868">
    <property type="reaction ID" value="UER00840"/>
</dbReference>
<dbReference type="PRO" id="PR:Q9FLQ4"/>
<dbReference type="Proteomes" id="UP000006548">
    <property type="component" value="Chromosome 5"/>
</dbReference>
<dbReference type="ExpressionAtlas" id="Q9FLQ4">
    <property type="expression patterns" value="baseline and differential"/>
</dbReference>
<dbReference type="GO" id="GO:0022626">
    <property type="term" value="C:cytosolic ribosome"/>
    <property type="evidence" value="ECO:0007005"/>
    <property type="project" value="TAIR"/>
</dbReference>
<dbReference type="GO" id="GO:0005739">
    <property type="term" value="C:mitochondrion"/>
    <property type="evidence" value="ECO:0000314"/>
    <property type="project" value="TAIR"/>
</dbReference>
<dbReference type="GO" id="GO:0045252">
    <property type="term" value="C:oxoglutarate dehydrogenase complex"/>
    <property type="evidence" value="ECO:0007669"/>
    <property type="project" value="InterPro"/>
</dbReference>
<dbReference type="GO" id="GO:0009536">
    <property type="term" value="C:plastid"/>
    <property type="evidence" value="ECO:0007005"/>
    <property type="project" value="TAIR"/>
</dbReference>
<dbReference type="GO" id="GO:0004149">
    <property type="term" value="F:dihydrolipoyllysine-residue succinyltransferase activity"/>
    <property type="evidence" value="ECO:0007669"/>
    <property type="project" value="UniProtKB-EC"/>
</dbReference>
<dbReference type="GO" id="GO:1901149">
    <property type="term" value="F:salicylic acid binding"/>
    <property type="evidence" value="ECO:0007005"/>
    <property type="project" value="TAIR"/>
</dbReference>
<dbReference type="GO" id="GO:0008270">
    <property type="term" value="F:zinc ion binding"/>
    <property type="evidence" value="ECO:0007005"/>
    <property type="project" value="TAIR"/>
</dbReference>
<dbReference type="GO" id="GO:0033512">
    <property type="term" value="P:L-lysine catabolic process to acetyl-CoA via saccharopine"/>
    <property type="evidence" value="ECO:0007669"/>
    <property type="project" value="UniProtKB-UniPathway"/>
</dbReference>
<dbReference type="GO" id="GO:0006099">
    <property type="term" value="P:tricarboxylic acid cycle"/>
    <property type="evidence" value="ECO:0007669"/>
    <property type="project" value="UniProtKB-KW"/>
</dbReference>
<dbReference type="CDD" id="cd06849">
    <property type="entry name" value="lipoyl_domain"/>
    <property type="match status" value="1"/>
</dbReference>
<dbReference type="FunFam" id="3.30.559.10:FF:000006">
    <property type="entry name" value="Dihydrolipoyllysine-residue succinyltransferase component of 2-oxoglutarate dehydrogenase complex, mitochondrial"/>
    <property type="match status" value="1"/>
</dbReference>
<dbReference type="Gene3D" id="2.40.50.100">
    <property type="match status" value="1"/>
</dbReference>
<dbReference type="Gene3D" id="3.30.559.10">
    <property type="entry name" value="Chloramphenicol acetyltransferase-like domain"/>
    <property type="match status" value="1"/>
</dbReference>
<dbReference type="InterPro" id="IPR003016">
    <property type="entry name" value="2-oxoA_DH_lipoyl-BS"/>
</dbReference>
<dbReference type="InterPro" id="IPR050537">
    <property type="entry name" value="2-oxoacid_dehydrogenase"/>
</dbReference>
<dbReference type="InterPro" id="IPR001078">
    <property type="entry name" value="2-oxoacid_DH_actylTfrase"/>
</dbReference>
<dbReference type="InterPro" id="IPR000089">
    <property type="entry name" value="Biotin_lipoyl"/>
</dbReference>
<dbReference type="InterPro" id="IPR023213">
    <property type="entry name" value="CAT-like_dom_sf"/>
</dbReference>
<dbReference type="InterPro" id="IPR011053">
    <property type="entry name" value="Single_hybrid_motif"/>
</dbReference>
<dbReference type="InterPro" id="IPR006255">
    <property type="entry name" value="SucB"/>
</dbReference>
<dbReference type="NCBIfam" id="TIGR01347">
    <property type="entry name" value="sucB"/>
    <property type="match status" value="1"/>
</dbReference>
<dbReference type="PANTHER" id="PTHR43416:SF40">
    <property type="entry name" value="DIHYDROLIPOYLLYSINE-RESIDUE SUCCINYLTRANSFERASE COMPONENT OF 2-OXOGLUTARATE DEHYDROGENASE COMPLEX 1, MITOCHONDRIAL"/>
    <property type="match status" value="1"/>
</dbReference>
<dbReference type="PANTHER" id="PTHR43416">
    <property type="entry name" value="DIHYDROLIPOYLLYSINE-RESIDUE SUCCINYLTRANSFERASE COMPONENT OF 2-OXOGLUTARATE DEHYDROGENASE COMPLEX, MITOCHONDRIAL-RELATED"/>
    <property type="match status" value="1"/>
</dbReference>
<dbReference type="Pfam" id="PF00198">
    <property type="entry name" value="2-oxoacid_dh"/>
    <property type="match status" value="1"/>
</dbReference>
<dbReference type="Pfam" id="PF00364">
    <property type="entry name" value="Biotin_lipoyl"/>
    <property type="match status" value="1"/>
</dbReference>
<dbReference type="SUPFAM" id="SSF52777">
    <property type="entry name" value="CoA-dependent acyltransferases"/>
    <property type="match status" value="1"/>
</dbReference>
<dbReference type="SUPFAM" id="SSF51230">
    <property type="entry name" value="Single hybrid motif"/>
    <property type="match status" value="1"/>
</dbReference>
<dbReference type="PROSITE" id="PS50968">
    <property type="entry name" value="BIOTINYL_LIPOYL"/>
    <property type="match status" value="1"/>
</dbReference>
<dbReference type="PROSITE" id="PS00189">
    <property type="entry name" value="LIPOYL"/>
    <property type="match status" value="1"/>
</dbReference>
<sequence>MMLRAVFRRASIRGSSSASGLGKSLQSSRVAVSAQFHSVSATETLVPRGNHAHSFHHRSCPGCPDCSRTIINGYQGTALQRWVRPFSSDSGDVVEAVVPHMGESITDGTLAAFLKKPGDRVEADEAIAQIETDKVTIDIASPASGVIQEFLVKEGDTVEPGNKVARISTSADAVSHVAPSEKAPEKPAPKPSPPAEKPKVESTKVAEKPKAPSPPPPPPSKQSAKEPQLPPKDRERRVPMTRLRKRVATRLKDSQNTFALLTTFNEVDMTNLMKLRSQYKDAFLEKHGVKLGLMSGFIKAAVSALQHQPVVNAVIDGDDIIYRDYVDISIAVGTSKGLVVPVIRDADKMNFADIEKTINGLAKKATEGTISIDEMAGGSFTVSNGGVYGSLISTPIINPPQSAILGMHSIVQRPMVVGGSVVPRPMMYVALTYDHRLIDGREAVYFLRRIKDVVEDPQRLLLDI</sequence>
<accession>Q9FLQ4</accession>
<accession>Q9ZRQ1</accession>